<accession>Q8E245</accession>
<feature type="chain" id="PRO_0000189270" description="Putative 4-diphosphocytidyl-2-C-methyl-D-erythritol kinase">
    <location>
        <begin position="1"/>
        <end position="283"/>
    </location>
</feature>
<feature type="active site" evidence="1">
    <location>
        <position position="10"/>
    </location>
</feature>
<feature type="active site" evidence="1">
    <location>
        <position position="136"/>
    </location>
</feature>
<feature type="binding site" evidence="1">
    <location>
        <begin position="94"/>
        <end position="104"/>
    </location>
    <ligand>
        <name>ATP</name>
        <dbReference type="ChEBI" id="CHEBI:30616"/>
    </ligand>
</feature>
<evidence type="ECO:0000255" key="1">
    <source>
        <dbReference type="HAMAP-Rule" id="MF_00061"/>
    </source>
</evidence>
<gene>
    <name type="primary">ispE</name>
    <name type="ordered locus">SAG0153</name>
</gene>
<comment type="function">
    <text evidence="1">Catalyzes the phosphorylation of the position 2 hydroxy group of 4-diphosphocytidyl-2C-methyl-D-erythritol.</text>
</comment>
<comment type="catalytic activity">
    <reaction evidence="1">
        <text>4-CDP-2-C-methyl-D-erythritol + ATP = 4-CDP-2-C-methyl-D-erythritol 2-phosphate + ADP + H(+)</text>
        <dbReference type="Rhea" id="RHEA:18437"/>
        <dbReference type="ChEBI" id="CHEBI:15378"/>
        <dbReference type="ChEBI" id="CHEBI:30616"/>
        <dbReference type="ChEBI" id="CHEBI:57823"/>
        <dbReference type="ChEBI" id="CHEBI:57919"/>
        <dbReference type="ChEBI" id="CHEBI:456216"/>
        <dbReference type="EC" id="2.7.1.148"/>
    </reaction>
</comment>
<comment type="similarity">
    <text evidence="1">Belongs to the GHMP kinase family. IspE subfamily.</text>
</comment>
<protein>
    <recommendedName>
        <fullName evidence="1">Putative 4-diphosphocytidyl-2-C-methyl-D-erythritol kinase</fullName>
        <shortName evidence="1">CMK</shortName>
        <ecNumber evidence="1">2.7.1.148</ecNumber>
    </recommendedName>
    <alternativeName>
        <fullName evidence="1">4-(cytidine-5'-diphospho)-2-C-methyl-D-erythritol kinase</fullName>
    </alternativeName>
</protein>
<keyword id="KW-0067">ATP-binding</keyword>
<keyword id="KW-0418">Kinase</keyword>
<keyword id="KW-0547">Nucleotide-binding</keyword>
<keyword id="KW-1185">Reference proteome</keyword>
<keyword id="KW-0808">Transferase</keyword>
<reference key="1">
    <citation type="journal article" date="2002" name="Proc. Natl. Acad. Sci. U.S.A.">
        <title>Complete genome sequence and comparative genomic analysis of an emerging human pathogen, serotype V Streptococcus agalactiae.</title>
        <authorList>
            <person name="Tettelin H."/>
            <person name="Masignani V."/>
            <person name="Cieslewicz M.J."/>
            <person name="Eisen J.A."/>
            <person name="Peterson S.N."/>
            <person name="Wessels M.R."/>
            <person name="Paulsen I.T."/>
            <person name="Nelson K.E."/>
            <person name="Margarit I."/>
            <person name="Read T.D."/>
            <person name="Madoff L.C."/>
            <person name="Wolf A.M."/>
            <person name="Beanan M.J."/>
            <person name="Brinkac L.M."/>
            <person name="Daugherty S.C."/>
            <person name="DeBoy R.T."/>
            <person name="Durkin A.S."/>
            <person name="Kolonay J.F."/>
            <person name="Madupu R."/>
            <person name="Lewis M.R."/>
            <person name="Radune D."/>
            <person name="Fedorova N.B."/>
            <person name="Scanlan D."/>
            <person name="Khouri H.M."/>
            <person name="Mulligan S."/>
            <person name="Carty H.A."/>
            <person name="Cline R.T."/>
            <person name="Van Aken S.E."/>
            <person name="Gill J."/>
            <person name="Scarselli M."/>
            <person name="Mora M."/>
            <person name="Iacobini E.T."/>
            <person name="Brettoni C."/>
            <person name="Galli G."/>
            <person name="Mariani M."/>
            <person name="Vegni F."/>
            <person name="Maione D."/>
            <person name="Rinaudo D."/>
            <person name="Rappuoli R."/>
            <person name="Telford J.L."/>
            <person name="Kasper D.L."/>
            <person name="Grandi G."/>
            <person name="Fraser C.M."/>
        </authorList>
    </citation>
    <scope>NUCLEOTIDE SEQUENCE [LARGE SCALE GENOMIC DNA]</scope>
    <source>
        <strain>ATCC BAA-611 / 2603 V/R</strain>
    </source>
</reference>
<proteinExistence type="inferred from homology"/>
<name>ISPE_STRA5</name>
<sequence>MKIFEKAPAKLNLGLDIKGRCDDGYHELAMIMVSIDLNDYVTISELKEDCIVIDSDSSKMPLNNDNDVFKAADIIKNQYGINKGVHIRLEKSIPVCAGLGGGSTDAAATIRALNRLWNLQMDYDEMVAIGFKIGSDVPYCLGGGCSLVLGKGEIVKPLPTLRPCWIVLVKPDFGISTKSIFRDIDCKSISRVDIDLLKSAILSSDYQLMVKSMGNSLEDITITKNPVISTIKERMLNSGADVALMTGSGPTVFSMCSTEKKADRVFNSMKGFCKEVYKVRLLR</sequence>
<organism>
    <name type="scientific">Streptococcus agalactiae serotype V (strain ATCC BAA-611 / 2603 V/R)</name>
    <dbReference type="NCBI Taxonomy" id="208435"/>
    <lineage>
        <taxon>Bacteria</taxon>
        <taxon>Bacillati</taxon>
        <taxon>Bacillota</taxon>
        <taxon>Bacilli</taxon>
        <taxon>Lactobacillales</taxon>
        <taxon>Streptococcaceae</taxon>
        <taxon>Streptococcus</taxon>
    </lineage>
</organism>
<dbReference type="EC" id="2.7.1.148" evidence="1"/>
<dbReference type="EMBL" id="AE009948">
    <property type="protein sequence ID" value="AAM99061.1"/>
    <property type="molecule type" value="Genomic_DNA"/>
</dbReference>
<dbReference type="RefSeq" id="NP_687189.1">
    <property type="nucleotide sequence ID" value="NC_004116.1"/>
</dbReference>
<dbReference type="RefSeq" id="WP_000688172.1">
    <property type="nucleotide sequence ID" value="NC_004116.1"/>
</dbReference>
<dbReference type="SMR" id="Q8E245"/>
<dbReference type="STRING" id="208435.SAG0153"/>
<dbReference type="KEGG" id="sag:SAG0153"/>
<dbReference type="PATRIC" id="fig|208435.3.peg.151"/>
<dbReference type="HOGENOM" id="CLU_053057_1_1_9"/>
<dbReference type="OrthoDB" id="9809438at2"/>
<dbReference type="Proteomes" id="UP000000821">
    <property type="component" value="Chromosome"/>
</dbReference>
<dbReference type="GO" id="GO:0050515">
    <property type="term" value="F:4-(cytidine 5'-diphospho)-2-C-methyl-D-erythritol kinase activity"/>
    <property type="evidence" value="ECO:0007669"/>
    <property type="project" value="UniProtKB-UniRule"/>
</dbReference>
<dbReference type="GO" id="GO:0005524">
    <property type="term" value="F:ATP binding"/>
    <property type="evidence" value="ECO:0007669"/>
    <property type="project" value="UniProtKB-UniRule"/>
</dbReference>
<dbReference type="GO" id="GO:0016114">
    <property type="term" value="P:terpenoid biosynthetic process"/>
    <property type="evidence" value="ECO:0007669"/>
    <property type="project" value="InterPro"/>
</dbReference>
<dbReference type="Gene3D" id="3.30.230.10">
    <property type="match status" value="1"/>
</dbReference>
<dbReference type="Gene3D" id="3.30.70.890">
    <property type="entry name" value="GHMP kinase, C-terminal domain"/>
    <property type="match status" value="1"/>
</dbReference>
<dbReference type="HAMAP" id="MF_00061">
    <property type="entry name" value="IspE"/>
    <property type="match status" value="1"/>
</dbReference>
<dbReference type="InterPro" id="IPR013750">
    <property type="entry name" value="GHMP_kinase_C_dom"/>
</dbReference>
<dbReference type="InterPro" id="IPR036554">
    <property type="entry name" value="GHMP_kinase_C_sf"/>
</dbReference>
<dbReference type="InterPro" id="IPR006204">
    <property type="entry name" value="GHMP_kinase_N_dom"/>
</dbReference>
<dbReference type="InterPro" id="IPR004424">
    <property type="entry name" value="IspE"/>
</dbReference>
<dbReference type="InterPro" id="IPR020568">
    <property type="entry name" value="Ribosomal_Su5_D2-typ_SF"/>
</dbReference>
<dbReference type="InterPro" id="IPR014721">
    <property type="entry name" value="Ribsml_uS5_D2-typ_fold_subgr"/>
</dbReference>
<dbReference type="NCBIfam" id="TIGR00154">
    <property type="entry name" value="ispE"/>
    <property type="match status" value="1"/>
</dbReference>
<dbReference type="PANTHER" id="PTHR43527">
    <property type="entry name" value="4-DIPHOSPHOCYTIDYL-2-C-METHYL-D-ERYTHRITOL KINASE, CHLOROPLASTIC"/>
    <property type="match status" value="1"/>
</dbReference>
<dbReference type="PANTHER" id="PTHR43527:SF2">
    <property type="entry name" value="4-DIPHOSPHOCYTIDYL-2-C-METHYL-D-ERYTHRITOL KINASE, CHLOROPLASTIC"/>
    <property type="match status" value="1"/>
</dbReference>
<dbReference type="Pfam" id="PF08544">
    <property type="entry name" value="GHMP_kinases_C"/>
    <property type="match status" value="1"/>
</dbReference>
<dbReference type="Pfam" id="PF00288">
    <property type="entry name" value="GHMP_kinases_N"/>
    <property type="match status" value="1"/>
</dbReference>
<dbReference type="PIRSF" id="PIRSF010376">
    <property type="entry name" value="IspE"/>
    <property type="match status" value="1"/>
</dbReference>
<dbReference type="SUPFAM" id="SSF55060">
    <property type="entry name" value="GHMP Kinase, C-terminal domain"/>
    <property type="match status" value="1"/>
</dbReference>
<dbReference type="SUPFAM" id="SSF54211">
    <property type="entry name" value="Ribosomal protein S5 domain 2-like"/>
    <property type="match status" value="1"/>
</dbReference>